<proteinExistence type="evidence at protein level"/>
<keyword id="KW-0002">3D-structure</keyword>
<keyword id="KW-0687">Ribonucleoprotein</keyword>
<keyword id="KW-0689">Ribosomal protein</keyword>
<keyword id="KW-0694">RNA-binding</keyword>
<keyword id="KW-0699">rRNA-binding</keyword>
<gene>
    <name evidence="1" type="primary">rplD</name>
    <name type="ordered locus">MW2168</name>
</gene>
<comment type="function">
    <text evidence="1">One of the primary rRNA binding proteins, this protein initially binds near the 5'-end of the 23S rRNA. It is important during the early stages of 50S assembly. It makes multiple contacts with different domains of the 23S rRNA in the assembled 50S subunit and ribosome.</text>
</comment>
<comment type="function">
    <text evidence="1">Forms part of the polypeptide exit tunnel.</text>
</comment>
<comment type="subunit">
    <text evidence="1">Part of the 50S ribosomal subunit.</text>
</comment>
<comment type="similarity">
    <text evidence="1">Belongs to the universal ribosomal protein uL4 family.</text>
</comment>
<evidence type="ECO:0000255" key="1">
    <source>
        <dbReference type="HAMAP-Rule" id="MF_01328"/>
    </source>
</evidence>
<evidence type="ECO:0000256" key="2">
    <source>
        <dbReference type="SAM" id="MobiDB-lite"/>
    </source>
</evidence>
<evidence type="ECO:0000305" key="3"/>
<accession>P61060</accession>
<accession>Q99S22</accession>
<feature type="chain" id="PRO_0000129279" description="Large ribosomal subunit protein uL4">
    <location>
        <begin position="1"/>
        <end position="207"/>
    </location>
</feature>
<feature type="region of interest" description="Disordered" evidence="2">
    <location>
        <begin position="50"/>
        <end position="76"/>
    </location>
</feature>
<sequence>MANYDVLKLDGTKSGSIELSDAVFGIEPNNSVLFEAINLQRASLRQGTHAVKNRSAVSGGGRKPWKQKGTGRARQGTIRAPQWRGGGIVFGPTPRSYAYKMPKKMRRLALRSALSFKAQENGLTVVDAFNFEAPKTKEFKNVLSTLEQPKKVLVVTENEDVNVELSARNIPGVQVTTAQGLNVLDITNADSLVITEAAAKKVEEVLG</sequence>
<organism>
    <name type="scientific">Staphylococcus aureus (strain MW2)</name>
    <dbReference type="NCBI Taxonomy" id="196620"/>
    <lineage>
        <taxon>Bacteria</taxon>
        <taxon>Bacillati</taxon>
        <taxon>Bacillota</taxon>
        <taxon>Bacilli</taxon>
        <taxon>Bacillales</taxon>
        <taxon>Staphylococcaceae</taxon>
        <taxon>Staphylococcus</taxon>
    </lineage>
</organism>
<dbReference type="EMBL" id="BA000033">
    <property type="protein sequence ID" value="BAB96033.1"/>
    <property type="molecule type" value="Genomic_DNA"/>
</dbReference>
<dbReference type="RefSeq" id="WP_000024827.1">
    <property type="nucleotide sequence ID" value="NC_003923.1"/>
</dbReference>
<dbReference type="PDB" id="8Y36">
    <property type="method" value="EM"/>
    <property type="resolution" value="2.65 A"/>
    <property type="chains" value="E=2-207"/>
</dbReference>
<dbReference type="PDB" id="8Y37">
    <property type="method" value="EM"/>
    <property type="resolution" value="2.53 A"/>
    <property type="chains" value="E=2-207"/>
</dbReference>
<dbReference type="PDB" id="8Y38">
    <property type="method" value="EM"/>
    <property type="resolution" value="2.58 A"/>
    <property type="chains" value="E=2-207"/>
</dbReference>
<dbReference type="PDB" id="8Y39">
    <property type="method" value="EM"/>
    <property type="resolution" value="3.60 A"/>
    <property type="chains" value="E=2-207"/>
</dbReference>
<dbReference type="PDBsum" id="8Y36"/>
<dbReference type="PDBsum" id="8Y37"/>
<dbReference type="PDBsum" id="8Y38"/>
<dbReference type="PDBsum" id="8Y39"/>
<dbReference type="EMDB" id="EMD-38873"/>
<dbReference type="EMDB" id="EMD-38874"/>
<dbReference type="EMDB" id="EMD-38875"/>
<dbReference type="EMDB" id="EMD-38876"/>
<dbReference type="SMR" id="P61060"/>
<dbReference type="KEGG" id="sam:MW2168"/>
<dbReference type="HOGENOM" id="CLU_041575_5_2_9"/>
<dbReference type="GO" id="GO:1990904">
    <property type="term" value="C:ribonucleoprotein complex"/>
    <property type="evidence" value="ECO:0007669"/>
    <property type="project" value="UniProtKB-KW"/>
</dbReference>
<dbReference type="GO" id="GO:0005840">
    <property type="term" value="C:ribosome"/>
    <property type="evidence" value="ECO:0007669"/>
    <property type="project" value="UniProtKB-KW"/>
</dbReference>
<dbReference type="GO" id="GO:0019843">
    <property type="term" value="F:rRNA binding"/>
    <property type="evidence" value="ECO:0007669"/>
    <property type="project" value="UniProtKB-UniRule"/>
</dbReference>
<dbReference type="GO" id="GO:0003735">
    <property type="term" value="F:structural constituent of ribosome"/>
    <property type="evidence" value="ECO:0007669"/>
    <property type="project" value="InterPro"/>
</dbReference>
<dbReference type="GO" id="GO:0006412">
    <property type="term" value="P:translation"/>
    <property type="evidence" value="ECO:0007669"/>
    <property type="project" value="UniProtKB-UniRule"/>
</dbReference>
<dbReference type="FunFam" id="3.40.1370.10:FF:000003">
    <property type="entry name" value="50S ribosomal protein L4"/>
    <property type="match status" value="1"/>
</dbReference>
<dbReference type="Gene3D" id="3.40.1370.10">
    <property type="match status" value="1"/>
</dbReference>
<dbReference type="HAMAP" id="MF_01328_B">
    <property type="entry name" value="Ribosomal_uL4_B"/>
    <property type="match status" value="1"/>
</dbReference>
<dbReference type="InterPro" id="IPR002136">
    <property type="entry name" value="Ribosomal_uL4"/>
</dbReference>
<dbReference type="InterPro" id="IPR013005">
    <property type="entry name" value="Ribosomal_uL4-like"/>
</dbReference>
<dbReference type="InterPro" id="IPR023574">
    <property type="entry name" value="Ribosomal_uL4_dom_sf"/>
</dbReference>
<dbReference type="NCBIfam" id="TIGR03953">
    <property type="entry name" value="rplD_bact"/>
    <property type="match status" value="1"/>
</dbReference>
<dbReference type="PANTHER" id="PTHR10746">
    <property type="entry name" value="50S RIBOSOMAL PROTEIN L4"/>
    <property type="match status" value="1"/>
</dbReference>
<dbReference type="PANTHER" id="PTHR10746:SF6">
    <property type="entry name" value="LARGE RIBOSOMAL SUBUNIT PROTEIN UL4M"/>
    <property type="match status" value="1"/>
</dbReference>
<dbReference type="Pfam" id="PF00573">
    <property type="entry name" value="Ribosomal_L4"/>
    <property type="match status" value="1"/>
</dbReference>
<dbReference type="SUPFAM" id="SSF52166">
    <property type="entry name" value="Ribosomal protein L4"/>
    <property type="match status" value="1"/>
</dbReference>
<reference key="1">
    <citation type="journal article" date="2002" name="Lancet">
        <title>Genome and virulence determinants of high virulence community-acquired MRSA.</title>
        <authorList>
            <person name="Baba T."/>
            <person name="Takeuchi F."/>
            <person name="Kuroda M."/>
            <person name="Yuzawa H."/>
            <person name="Aoki K."/>
            <person name="Oguchi A."/>
            <person name="Nagai Y."/>
            <person name="Iwama N."/>
            <person name="Asano K."/>
            <person name="Naimi T."/>
            <person name="Kuroda H."/>
            <person name="Cui L."/>
            <person name="Yamamoto K."/>
            <person name="Hiramatsu K."/>
        </authorList>
    </citation>
    <scope>NUCLEOTIDE SEQUENCE [LARGE SCALE GENOMIC DNA]</scope>
    <source>
        <strain>MW2</strain>
    </source>
</reference>
<protein>
    <recommendedName>
        <fullName evidence="1">Large ribosomal subunit protein uL4</fullName>
    </recommendedName>
    <alternativeName>
        <fullName evidence="3">50S ribosomal protein L4</fullName>
    </alternativeName>
</protein>
<name>RL4_STAAW</name>